<comment type="function">
    <text>Isotocin causes contraction of smooth muscles.</text>
</comment>
<comment type="similarity">
    <text evidence="3">Belongs to the vasopressin/oxytocin family.</text>
</comment>
<reference key="1">
    <citation type="journal article" date="1989" name="EMBO J.">
        <title>Two isotocin genes are present in the white sucker Catostomus commersoni both lacking introns in their protein coding regions.</title>
        <authorList>
            <person name="Figueroa J."/>
            <person name="Morley S.D."/>
            <person name="Heierhorst J."/>
            <person name="Krentler C."/>
            <person name="Lederis K."/>
            <person name="Richter D."/>
        </authorList>
    </citation>
    <scope>NUCLEOTIDE SEQUENCE [MRNA]</scope>
</reference>
<reference key="2">
    <citation type="journal article" date="1989" name="Proc. Natl. Acad. Sci. U.S.A.">
        <title>Vasotocin and isotocin precursors from the white sucker, Catostomus commersoni: cloning and sequence analysis of the cDNAs.</title>
        <authorList>
            <person name="Heierhorst J."/>
            <person name="Morley S.D."/>
            <person name="Figueroa J."/>
            <person name="Krentler C."/>
            <person name="Lederis K."/>
            <person name="Richter D."/>
        </authorList>
    </citation>
    <scope>NUCLEOTIDE SEQUENCE [MRNA]</scope>
</reference>
<feature type="signal peptide">
    <location>
        <begin position="1"/>
        <end position="20"/>
    </location>
</feature>
<feature type="peptide" id="PRO_0000020544" description="Isotocin">
    <location>
        <begin position="21"/>
        <end position="29"/>
    </location>
</feature>
<feature type="chain" id="PRO_0000020545" description="Neurophysin IT 1">
    <location>
        <begin position="32"/>
        <end position="154"/>
    </location>
</feature>
<feature type="modified residue" description="Glycine amide" evidence="1">
    <location>
        <position position="29"/>
    </location>
</feature>
<feature type="disulfide bond" evidence="2">
    <location>
        <begin position="21"/>
        <end position="26"/>
    </location>
</feature>
<feature type="disulfide bond" evidence="2">
    <location>
        <begin position="42"/>
        <end position="86"/>
    </location>
</feature>
<feature type="disulfide bond" evidence="2">
    <location>
        <begin position="45"/>
        <end position="59"/>
    </location>
</feature>
<feature type="disulfide bond" evidence="2">
    <location>
        <begin position="53"/>
        <end position="76"/>
    </location>
</feature>
<feature type="disulfide bond" evidence="2">
    <location>
        <begin position="60"/>
        <end position="66"/>
    </location>
</feature>
<feature type="disulfide bond" evidence="2">
    <location>
        <begin position="93"/>
        <end position="105"/>
    </location>
</feature>
<feature type="disulfide bond" evidence="2">
    <location>
        <begin position="99"/>
        <end position="117"/>
    </location>
</feature>
<feature type="disulfide bond" evidence="2">
    <location>
        <begin position="106"/>
        <end position="111"/>
    </location>
</feature>
<evidence type="ECO:0000250" key="1"/>
<evidence type="ECO:0000250" key="2">
    <source>
        <dbReference type="UniProtKB" id="P01175"/>
    </source>
</evidence>
<evidence type="ECO:0000305" key="3"/>
<accession>P15210</accession>
<dbReference type="EMBL" id="X16621">
    <property type="protein sequence ID" value="CAA34618.1"/>
    <property type="molecule type" value="mRNA"/>
</dbReference>
<dbReference type="PIR" id="S06018">
    <property type="entry name" value="A33896"/>
</dbReference>
<dbReference type="SMR" id="P15210"/>
<dbReference type="GO" id="GO:0005615">
    <property type="term" value="C:extracellular space"/>
    <property type="evidence" value="ECO:0007669"/>
    <property type="project" value="TreeGrafter"/>
</dbReference>
<dbReference type="GO" id="GO:0030141">
    <property type="term" value="C:secretory granule"/>
    <property type="evidence" value="ECO:0007669"/>
    <property type="project" value="TreeGrafter"/>
</dbReference>
<dbReference type="GO" id="GO:0005185">
    <property type="term" value="F:neurohypophyseal hormone activity"/>
    <property type="evidence" value="ECO:0007669"/>
    <property type="project" value="InterPro"/>
</dbReference>
<dbReference type="FunFam" id="2.60.9.10:FF:000001">
    <property type="entry name" value="oxytocin-neurophysin 1"/>
    <property type="match status" value="1"/>
</dbReference>
<dbReference type="Gene3D" id="2.60.9.10">
    <property type="entry name" value="Neurohypophysial hormone domain"/>
    <property type="match status" value="1"/>
</dbReference>
<dbReference type="InterPro" id="IPR000981">
    <property type="entry name" value="Neurhyp_horm"/>
</dbReference>
<dbReference type="InterPro" id="IPR036387">
    <property type="entry name" value="Neurhyp_horm_dom_sf"/>
</dbReference>
<dbReference type="InterPro" id="IPR022423">
    <property type="entry name" value="Neurohypophysial_hormone_CS"/>
</dbReference>
<dbReference type="PANTHER" id="PTHR11681:SF5">
    <property type="entry name" value="ISOTOCIN"/>
    <property type="match status" value="1"/>
</dbReference>
<dbReference type="PANTHER" id="PTHR11681">
    <property type="entry name" value="NEUROPHYSIN"/>
    <property type="match status" value="1"/>
</dbReference>
<dbReference type="Pfam" id="PF00184">
    <property type="entry name" value="Hormone_5"/>
    <property type="match status" value="1"/>
</dbReference>
<dbReference type="PIRSF" id="PIRSF001815">
    <property type="entry name" value="Nonapeptide_hormone_precursor"/>
    <property type="match status" value="1"/>
</dbReference>
<dbReference type="PRINTS" id="PR00831">
    <property type="entry name" value="NEUROPHYSIN"/>
</dbReference>
<dbReference type="SMART" id="SM00003">
    <property type="entry name" value="NH"/>
    <property type="match status" value="1"/>
</dbReference>
<dbReference type="SUPFAM" id="SSF49606">
    <property type="entry name" value="Neurophysin II"/>
    <property type="match status" value="1"/>
</dbReference>
<dbReference type="PROSITE" id="PS00264">
    <property type="entry name" value="NEUROHYPOPHYS_HORM"/>
    <property type="match status" value="1"/>
</dbReference>
<name>NEU1_CATCO</name>
<organism>
    <name type="scientific">Catostomus commersonii</name>
    <name type="common">White sucker</name>
    <name type="synonym">Cyprinus commersonnii</name>
    <dbReference type="NCBI Taxonomy" id="7971"/>
    <lineage>
        <taxon>Eukaryota</taxon>
        <taxon>Metazoa</taxon>
        <taxon>Chordata</taxon>
        <taxon>Craniata</taxon>
        <taxon>Vertebrata</taxon>
        <taxon>Euteleostomi</taxon>
        <taxon>Actinopterygii</taxon>
        <taxon>Neopterygii</taxon>
        <taxon>Teleostei</taxon>
        <taxon>Ostariophysi</taxon>
        <taxon>Cypriniformes</taxon>
        <taxon>Catostomoidei</taxon>
        <taxon>Catostomidae</taxon>
        <taxon>Catostomus</taxon>
    </lineage>
</organism>
<sequence>MSGSMFSVFSLLYLLSVCSACYISNCPIGGKRAIQDSPSRQCMSCGPGDRGRCFGPSICCGEGLGCLLGSPETQRCLEEDFLPSPCEAGGKVCGYEGRCAAPGVCCDSEGCSVDQSCVDGDGDATAVSQPASSQDLLLKLLHLSNPAHPYRLHQ</sequence>
<protein>
    <recommendedName>
        <fullName>Isotocin-neurophysin IT 1</fullName>
    </recommendedName>
    <component>
        <recommendedName>
            <fullName>Isotocin</fullName>
            <shortName>IT</shortName>
        </recommendedName>
    </component>
    <component>
        <recommendedName>
            <fullName>Neurophysin IT 1</fullName>
        </recommendedName>
    </component>
</protein>
<proteinExistence type="evidence at transcript level"/>
<keyword id="KW-0027">Amidation</keyword>
<keyword id="KW-0165">Cleavage on pair of basic residues</keyword>
<keyword id="KW-1015">Disulfide bond</keyword>
<keyword id="KW-0372">Hormone</keyword>
<keyword id="KW-0732">Signal</keyword>